<sequence length="95" mass="10465">MIQAWHFPALQGAVNELQGSQSRIDALLEQCQESLTKLQSSWHGSGNESYSSVQRRFNQNTEGINHALGDLVQAINHSAETMQQTEAGVMSMFTG</sequence>
<feature type="chain" id="PRO_0000167792" description="6 kDa early secretory antigenic target homolog">
    <location>
        <begin position="1"/>
        <end position="95"/>
    </location>
</feature>
<feature type="sequence conflict" description="In Ref. 1; CAA62441." evidence="4" ref="1">
    <original>R</original>
    <variation>Q</variation>
    <location>
        <position position="55"/>
    </location>
</feature>
<feature type="sequence conflict" description="In Ref. 1; CAA62441." evidence="4" ref="1">
    <original>M</original>
    <variation>T</variation>
    <location>
        <position position="90"/>
    </location>
</feature>
<dbReference type="EMBL" id="X90946">
    <property type="protein sequence ID" value="CAA62441.1"/>
    <property type="molecule type" value="Genomic_DNA"/>
</dbReference>
<dbReference type="EMBL" id="Y14967">
    <property type="protein sequence ID" value="CAA75200.1"/>
    <property type="molecule type" value="Genomic_DNA"/>
</dbReference>
<dbReference type="EMBL" id="AL583917">
    <property type="protein sequence ID" value="CAC29557.1"/>
    <property type="molecule type" value="Genomic_DNA"/>
</dbReference>
<dbReference type="PIR" id="T10031">
    <property type="entry name" value="T10031"/>
</dbReference>
<dbReference type="RefSeq" id="NP_301162.1">
    <property type="nucleotide sequence ID" value="NC_002677.1"/>
</dbReference>
<dbReference type="RefSeq" id="WP_010907487.1">
    <property type="nucleotide sequence ID" value="NC_002677.1"/>
</dbReference>
<dbReference type="SMR" id="Q50206"/>
<dbReference type="IntAct" id="Q50206">
    <property type="interactions" value="1"/>
</dbReference>
<dbReference type="MINT" id="Q50206"/>
<dbReference type="STRING" id="272631.gene:17573861"/>
<dbReference type="KEGG" id="mle:ML0049"/>
<dbReference type="PATRIC" id="fig|272631.5.peg.72"/>
<dbReference type="Leproma" id="ML0049"/>
<dbReference type="eggNOG" id="COG4842">
    <property type="taxonomic scope" value="Bacteria"/>
</dbReference>
<dbReference type="HOGENOM" id="CLU_151185_3_4_11"/>
<dbReference type="OrthoDB" id="3387628at2"/>
<dbReference type="Proteomes" id="UP000000806">
    <property type="component" value="Chromosome"/>
</dbReference>
<dbReference type="GO" id="GO:0005576">
    <property type="term" value="C:extracellular region"/>
    <property type="evidence" value="ECO:0007669"/>
    <property type="project" value="UniProtKB-SubCell"/>
</dbReference>
<dbReference type="Gene3D" id="1.10.287.1060">
    <property type="entry name" value="ESAT-6-like"/>
    <property type="match status" value="1"/>
</dbReference>
<dbReference type="InterPro" id="IPR036689">
    <property type="entry name" value="ESAT-6-like_sf"/>
</dbReference>
<dbReference type="InterPro" id="IPR010310">
    <property type="entry name" value="T7SS_ESAT-6-like"/>
</dbReference>
<dbReference type="NCBIfam" id="TIGR03930">
    <property type="entry name" value="WXG100_ESAT6"/>
    <property type="match status" value="1"/>
</dbReference>
<dbReference type="Pfam" id="PF06013">
    <property type="entry name" value="WXG100"/>
    <property type="match status" value="1"/>
</dbReference>
<dbReference type="SUPFAM" id="SSF140453">
    <property type="entry name" value="EsxAB dimer-like"/>
    <property type="match status" value="1"/>
</dbReference>
<protein>
    <recommendedName>
        <fullName>6 kDa early secretory antigenic target homolog</fullName>
    </recommendedName>
    <alternativeName>
        <fullName>ESAT-6-like protein</fullName>
    </alternativeName>
    <alternativeName>
        <fullName>L-ESAT</fullName>
    </alternativeName>
</protein>
<comment type="function">
    <text evidence="2">A secreted protein that might play a role in virulence.</text>
</comment>
<comment type="subunit">
    <text evidence="3">Forms a tight 1:1 complex with EsxB (PubMed:20085764).</text>
</comment>
<comment type="subcellular location">
    <subcellularLocation>
        <location evidence="1">Secreted</location>
    </subcellularLocation>
    <text evidence="2">Probably secreted via an ESX / type VII secretion system (T7SS).</text>
</comment>
<comment type="similarity">
    <text evidence="4">Belongs to the WXG100 family. ESAT-6 subfamily.</text>
</comment>
<organism>
    <name type="scientific">Mycobacterium leprae (strain TN)</name>
    <dbReference type="NCBI Taxonomy" id="272631"/>
    <lineage>
        <taxon>Bacteria</taxon>
        <taxon>Bacillati</taxon>
        <taxon>Actinomycetota</taxon>
        <taxon>Actinomycetes</taxon>
        <taxon>Mycobacteriales</taxon>
        <taxon>Mycobacteriaceae</taxon>
        <taxon>Mycobacterium</taxon>
    </lineage>
</organism>
<reference key="1">
    <citation type="submission" date="1995-08" db="EMBL/GenBank/DDBJ databases">
        <authorList>
            <person name="Wieles B."/>
            <person name="Notenboom T."/>
            <person name="Naafs B."/>
            <person name="Offringa R."/>
            <person name="Ottenhoff T."/>
        </authorList>
    </citation>
    <scope>NUCLEOTIDE SEQUENCE [GENOMIC DNA]</scope>
</reference>
<reference key="2">
    <citation type="journal article" date="2001" name="Nature">
        <title>Massive gene decay in the leprosy bacillus.</title>
        <authorList>
            <person name="Cole S.T."/>
            <person name="Eiglmeier K."/>
            <person name="Parkhill J."/>
            <person name="James K.D."/>
            <person name="Thomson N.R."/>
            <person name="Wheeler P.R."/>
            <person name="Honore N."/>
            <person name="Garnier T."/>
            <person name="Churcher C.M."/>
            <person name="Harris D.E."/>
            <person name="Mungall K.L."/>
            <person name="Basham D."/>
            <person name="Brown D."/>
            <person name="Chillingworth T."/>
            <person name="Connor R."/>
            <person name="Davies R.M."/>
            <person name="Devlin K."/>
            <person name="Duthoy S."/>
            <person name="Feltwell T."/>
            <person name="Fraser A."/>
            <person name="Hamlin N."/>
            <person name="Holroyd S."/>
            <person name="Hornsby T."/>
            <person name="Jagels K."/>
            <person name="Lacroix C."/>
            <person name="Maclean J."/>
            <person name="Moule S."/>
            <person name="Murphy L.D."/>
            <person name="Oliver K."/>
            <person name="Quail M.A."/>
            <person name="Rajandream M.A."/>
            <person name="Rutherford K.M."/>
            <person name="Rutter S."/>
            <person name="Seeger K."/>
            <person name="Simon S."/>
            <person name="Simmonds M."/>
            <person name="Skelton J."/>
            <person name="Squares R."/>
            <person name="Squares S."/>
            <person name="Stevens K."/>
            <person name="Taylor K."/>
            <person name="Whitehead S."/>
            <person name="Woodward J.R."/>
            <person name="Barrell B.G."/>
        </authorList>
    </citation>
    <scope>NUCLEOTIDE SEQUENCE [LARGE SCALE GENOMIC DNA]</scope>
    <source>
        <strain>TN</strain>
    </source>
</reference>
<reference key="3">
    <citation type="journal article" date="2010" name="FEBS Lett.">
        <title>Stoichiometric protein complex formation and over-expression using the prokaryotic native operon structure.</title>
        <authorList>
            <person name="Poulsen C."/>
            <person name="Holton S."/>
            <person name="Geerlof A."/>
            <person name="Wilmanns M."/>
            <person name="Song Y.H."/>
        </authorList>
    </citation>
    <scope>SUBUNIT</scope>
    <source>
        <strain>TN</strain>
    </source>
</reference>
<accession>Q50206</accession>
<accession>O33083</accession>
<evidence type="ECO:0000250" key="1"/>
<evidence type="ECO:0000250" key="2">
    <source>
        <dbReference type="UniProtKB" id="P9WNK7"/>
    </source>
</evidence>
<evidence type="ECO:0000269" key="3">
    <source>
    </source>
</evidence>
<evidence type="ECO:0000305" key="4"/>
<gene>
    <name type="primary">esxA</name>
    <name type="synonym">esaT6</name>
    <name type="synonym">esx</name>
    <name type="synonym">L45</name>
    <name type="ordered locus">ML0049</name>
    <name type="ORF">MLCB628.12c</name>
</gene>
<keyword id="KW-1185">Reference proteome</keyword>
<keyword id="KW-0964">Secreted</keyword>
<keyword id="KW-0843">Virulence</keyword>
<name>ESXA_MYCLE</name>
<proteinExistence type="evidence at protein level"/>